<comment type="catalytic activity">
    <reaction evidence="1">
        <text>L-glutamate + acetyl-CoA = N-acetyl-L-glutamate + CoA + H(+)</text>
        <dbReference type="Rhea" id="RHEA:24292"/>
        <dbReference type="ChEBI" id="CHEBI:15378"/>
        <dbReference type="ChEBI" id="CHEBI:29985"/>
        <dbReference type="ChEBI" id="CHEBI:44337"/>
        <dbReference type="ChEBI" id="CHEBI:57287"/>
        <dbReference type="ChEBI" id="CHEBI:57288"/>
        <dbReference type="EC" id="2.3.1.1"/>
    </reaction>
</comment>
<comment type="pathway">
    <text evidence="1">Amino-acid biosynthesis; L-arginine biosynthesis; N(2)-acetyl-L-ornithine from L-glutamate: step 1/4.</text>
</comment>
<comment type="subunit">
    <text evidence="1">Homohexamer.</text>
</comment>
<comment type="subcellular location">
    <subcellularLocation>
        <location evidence="1">Cytoplasm</location>
    </subcellularLocation>
</comment>
<comment type="similarity">
    <text evidence="1">Belongs to the acetyltransferase family. ArgA subfamily.</text>
</comment>
<feature type="chain" id="PRO_1000084827" description="Amino-acid acetyltransferase">
    <location>
        <begin position="1"/>
        <end position="441"/>
    </location>
</feature>
<feature type="domain" description="N-acetyltransferase" evidence="1">
    <location>
        <begin position="295"/>
        <end position="434"/>
    </location>
</feature>
<organism>
    <name type="scientific">Yersinia pestis bv. Antiqua (strain Nepal516)</name>
    <dbReference type="NCBI Taxonomy" id="377628"/>
    <lineage>
        <taxon>Bacteria</taxon>
        <taxon>Pseudomonadati</taxon>
        <taxon>Pseudomonadota</taxon>
        <taxon>Gammaproteobacteria</taxon>
        <taxon>Enterobacterales</taxon>
        <taxon>Yersiniaceae</taxon>
        <taxon>Yersinia</taxon>
    </lineage>
</organism>
<protein>
    <recommendedName>
        <fullName evidence="1">Amino-acid acetyltransferase</fullName>
        <ecNumber evidence="1">2.3.1.1</ecNumber>
    </recommendedName>
    <alternativeName>
        <fullName evidence="1">N-acetylglutamate synthase</fullName>
        <shortName evidence="1">AGS</shortName>
        <shortName evidence="1">NAGS</shortName>
    </alternativeName>
</protein>
<dbReference type="EC" id="2.3.1.1" evidence="1"/>
<dbReference type="EMBL" id="CP000305">
    <property type="protein sequence ID" value="ABG19306.1"/>
    <property type="molecule type" value="Genomic_DNA"/>
</dbReference>
<dbReference type="EMBL" id="ACNQ01000017">
    <property type="protein sequence ID" value="EEO75455.1"/>
    <property type="molecule type" value="Genomic_DNA"/>
</dbReference>
<dbReference type="RefSeq" id="WP_002211624.1">
    <property type="nucleotide sequence ID" value="NZ_ACNQ01000017.1"/>
</dbReference>
<dbReference type="SMR" id="Q1CFC4"/>
<dbReference type="GeneID" id="96662393"/>
<dbReference type="KEGG" id="ypn:YPN_2979"/>
<dbReference type="HOGENOM" id="CLU_024773_0_0_6"/>
<dbReference type="UniPathway" id="UPA00068">
    <property type="reaction ID" value="UER00106"/>
</dbReference>
<dbReference type="Proteomes" id="UP000008936">
    <property type="component" value="Chromosome"/>
</dbReference>
<dbReference type="GO" id="GO:0005737">
    <property type="term" value="C:cytoplasm"/>
    <property type="evidence" value="ECO:0007669"/>
    <property type="project" value="UniProtKB-SubCell"/>
</dbReference>
<dbReference type="GO" id="GO:0004042">
    <property type="term" value="F:L-glutamate N-acetyltransferase activity"/>
    <property type="evidence" value="ECO:0007669"/>
    <property type="project" value="UniProtKB-UniRule"/>
</dbReference>
<dbReference type="GO" id="GO:0006526">
    <property type="term" value="P:L-arginine biosynthetic process"/>
    <property type="evidence" value="ECO:0007669"/>
    <property type="project" value="UniProtKB-UniRule"/>
</dbReference>
<dbReference type="CDD" id="cd04237">
    <property type="entry name" value="AAK_NAGS-ABP"/>
    <property type="match status" value="1"/>
</dbReference>
<dbReference type="CDD" id="cd04301">
    <property type="entry name" value="NAT_SF"/>
    <property type="match status" value="1"/>
</dbReference>
<dbReference type="FunFam" id="3.40.1160.10:FF:000005">
    <property type="entry name" value="Amino-acid acetyltransferase"/>
    <property type="match status" value="1"/>
</dbReference>
<dbReference type="FunFam" id="3.40.630.30:FF:000009">
    <property type="entry name" value="Amino-acid acetyltransferase"/>
    <property type="match status" value="1"/>
</dbReference>
<dbReference type="Gene3D" id="3.40.630.30">
    <property type="match status" value="1"/>
</dbReference>
<dbReference type="Gene3D" id="3.40.1160.10">
    <property type="entry name" value="Acetylglutamate kinase-like"/>
    <property type="match status" value="1"/>
</dbReference>
<dbReference type="HAMAP" id="MF_01105">
    <property type="entry name" value="N_acetyl_glu_synth"/>
    <property type="match status" value="1"/>
</dbReference>
<dbReference type="InterPro" id="IPR036393">
    <property type="entry name" value="AceGlu_kinase-like_sf"/>
</dbReference>
<dbReference type="InterPro" id="IPR016181">
    <property type="entry name" value="Acyl_CoA_acyltransferase"/>
</dbReference>
<dbReference type="InterPro" id="IPR001048">
    <property type="entry name" value="Asp/Glu/Uridylate_kinase"/>
</dbReference>
<dbReference type="InterPro" id="IPR000182">
    <property type="entry name" value="GNAT_dom"/>
</dbReference>
<dbReference type="InterPro" id="IPR033719">
    <property type="entry name" value="NAGS_kin"/>
</dbReference>
<dbReference type="InterPro" id="IPR010167">
    <property type="entry name" value="NH2A_AcTrfase"/>
</dbReference>
<dbReference type="NCBIfam" id="TIGR01890">
    <property type="entry name" value="N-Ac-Glu-synth"/>
    <property type="match status" value="1"/>
</dbReference>
<dbReference type="NCBIfam" id="NF003641">
    <property type="entry name" value="PRK05279.1"/>
    <property type="match status" value="1"/>
</dbReference>
<dbReference type="PANTHER" id="PTHR30602">
    <property type="entry name" value="AMINO-ACID ACETYLTRANSFERASE"/>
    <property type="match status" value="1"/>
</dbReference>
<dbReference type="PANTHER" id="PTHR30602:SF12">
    <property type="entry name" value="AMINO-ACID ACETYLTRANSFERASE NAGS1, CHLOROPLASTIC-RELATED"/>
    <property type="match status" value="1"/>
</dbReference>
<dbReference type="Pfam" id="PF00696">
    <property type="entry name" value="AA_kinase"/>
    <property type="match status" value="1"/>
</dbReference>
<dbReference type="Pfam" id="PF00583">
    <property type="entry name" value="Acetyltransf_1"/>
    <property type="match status" value="1"/>
</dbReference>
<dbReference type="PIRSF" id="PIRSF000423">
    <property type="entry name" value="ArgA"/>
    <property type="match status" value="1"/>
</dbReference>
<dbReference type="SUPFAM" id="SSF55729">
    <property type="entry name" value="Acyl-CoA N-acyltransferases (Nat)"/>
    <property type="match status" value="1"/>
</dbReference>
<dbReference type="SUPFAM" id="SSF53633">
    <property type="entry name" value="Carbamate kinase-like"/>
    <property type="match status" value="1"/>
</dbReference>
<dbReference type="PROSITE" id="PS51186">
    <property type="entry name" value="GNAT"/>
    <property type="match status" value="1"/>
</dbReference>
<proteinExistence type="inferred from homology"/>
<gene>
    <name evidence="1" type="primary">argA</name>
    <name type="ordered locus">YPN_2979</name>
    <name type="ORF">YP516_3375</name>
</gene>
<reference key="1">
    <citation type="journal article" date="2006" name="J. Bacteriol.">
        <title>Complete genome sequence of Yersinia pestis strains Antiqua and Nepal516: evidence of gene reduction in an emerging pathogen.</title>
        <authorList>
            <person name="Chain P.S.G."/>
            <person name="Hu P."/>
            <person name="Malfatti S.A."/>
            <person name="Radnedge L."/>
            <person name="Larimer F."/>
            <person name="Vergez L.M."/>
            <person name="Worsham P."/>
            <person name="Chu M.C."/>
            <person name="Andersen G.L."/>
        </authorList>
    </citation>
    <scope>NUCLEOTIDE SEQUENCE [LARGE SCALE GENOMIC DNA]</scope>
    <source>
        <strain>Nepal516</strain>
    </source>
</reference>
<reference key="2">
    <citation type="submission" date="2009-04" db="EMBL/GenBank/DDBJ databases">
        <title>Yersinia pestis Nepal516A whole genome shotgun sequencing project.</title>
        <authorList>
            <person name="Plunkett G. III"/>
            <person name="Anderson B.D."/>
            <person name="Baumler D.J."/>
            <person name="Burland V."/>
            <person name="Cabot E.L."/>
            <person name="Glasner J.D."/>
            <person name="Mau B."/>
            <person name="Neeno-Eckwall E."/>
            <person name="Perna N.T."/>
            <person name="Munk A.C."/>
            <person name="Tapia R."/>
            <person name="Green L.D."/>
            <person name="Rogers Y.C."/>
            <person name="Detter J.C."/>
            <person name="Bruce D.C."/>
            <person name="Brettin T.S."/>
        </authorList>
    </citation>
    <scope>NUCLEOTIDE SEQUENCE [LARGE SCALE GENOMIC DNA]</scope>
    <source>
        <strain>Nepal516</strain>
    </source>
</reference>
<name>ARGA_YERPN</name>
<keyword id="KW-0012">Acyltransferase</keyword>
<keyword id="KW-0028">Amino-acid biosynthesis</keyword>
<keyword id="KW-0055">Arginine biosynthesis</keyword>
<keyword id="KW-0963">Cytoplasm</keyword>
<keyword id="KW-0808">Transferase</keyword>
<accession>Q1CFC4</accession>
<accession>C4GX05</accession>
<evidence type="ECO:0000255" key="1">
    <source>
        <dbReference type="HAMAP-Rule" id="MF_01105"/>
    </source>
</evidence>
<sequence>MKERSTELVQGFRHSVPYINAHRGKTFVVMLGGEAIEHENFSSIVNDIGLLHSLGIRLVVVYGARPQIDSNLADHNYEPIYHKHTRVTDARTLEMVKQAAGLLQLDITARLSMSLNNTPLQGAHINVVSGNFIIAQPLGVDDGVDYCHSGRIRRIDEEAIHRQLDNGAIVLLGPVAVSVTGESFNLTSEEVATQLAIKLKAEKMIGFCSSQGVTDSEGNIISELFPNDAQKRIEDLEQDGDYNSGTVRFLRGAVKACRSGVRRSHLLSYQEDGALIQELFSRDGIGTQIVMESAEQVRRATINDIGGILELIRPLEQQGILVRRSREQLEMEIDKFTIIERDNLTIACAALYPFPDEHIGEMACVAVHPDYRSSSRGEMLLNRITNQARQMGLKKLFVLTTRSIHWFQERGFTPAEVDVLPIQKQELYNYQRRSKILLADL</sequence>